<proteinExistence type="inferred from homology"/>
<sequence>MADESKFDQFKGNVKETVGNVTDNKELEKEGQQDKATGKAKEVVENAKNKITDAIDKLKK</sequence>
<reference key="1">
    <citation type="journal article" date="2004" name="Proc. Natl. Acad. Sci. U.S.A.">
        <title>Complete genomes of two clinical Staphylococcus aureus strains: evidence for the rapid evolution of virulence and drug resistance.</title>
        <authorList>
            <person name="Holden M.T.G."/>
            <person name="Feil E.J."/>
            <person name="Lindsay J.A."/>
            <person name="Peacock S.J."/>
            <person name="Day N.P.J."/>
            <person name="Enright M.C."/>
            <person name="Foster T.J."/>
            <person name="Moore C.E."/>
            <person name="Hurst L."/>
            <person name="Atkin R."/>
            <person name="Barron A."/>
            <person name="Bason N."/>
            <person name="Bentley S.D."/>
            <person name="Chillingworth C."/>
            <person name="Chillingworth T."/>
            <person name="Churcher C."/>
            <person name="Clark L."/>
            <person name="Corton C."/>
            <person name="Cronin A."/>
            <person name="Doggett J."/>
            <person name="Dowd L."/>
            <person name="Feltwell T."/>
            <person name="Hance Z."/>
            <person name="Harris B."/>
            <person name="Hauser H."/>
            <person name="Holroyd S."/>
            <person name="Jagels K."/>
            <person name="James K.D."/>
            <person name="Lennard N."/>
            <person name="Line A."/>
            <person name="Mayes R."/>
            <person name="Moule S."/>
            <person name="Mungall K."/>
            <person name="Ormond D."/>
            <person name="Quail M.A."/>
            <person name="Rabbinowitsch E."/>
            <person name="Rutherford K.M."/>
            <person name="Sanders M."/>
            <person name="Sharp S."/>
            <person name="Simmonds M."/>
            <person name="Stevens K."/>
            <person name="Whitehead S."/>
            <person name="Barrell B.G."/>
            <person name="Spratt B.G."/>
            <person name="Parkhill J."/>
        </authorList>
    </citation>
    <scope>NUCLEOTIDE SEQUENCE [LARGE SCALE GENOMIC DNA]</scope>
    <source>
        <strain>MRSA252</strain>
    </source>
</reference>
<feature type="chain" id="PRO_0000210035" description="UPF0337 protein SAR1705">
    <location>
        <begin position="1"/>
        <end position="60"/>
    </location>
</feature>
<feature type="region of interest" description="Disordered" evidence="1">
    <location>
        <begin position="18"/>
        <end position="41"/>
    </location>
</feature>
<feature type="compositionally biased region" description="Basic and acidic residues" evidence="1">
    <location>
        <begin position="23"/>
        <end position="41"/>
    </location>
</feature>
<organism>
    <name type="scientific">Staphylococcus aureus (strain MRSA252)</name>
    <dbReference type="NCBI Taxonomy" id="282458"/>
    <lineage>
        <taxon>Bacteria</taxon>
        <taxon>Bacillati</taxon>
        <taxon>Bacillota</taxon>
        <taxon>Bacilli</taxon>
        <taxon>Bacillales</taxon>
        <taxon>Staphylococcaceae</taxon>
        <taxon>Staphylococcus</taxon>
    </lineage>
</organism>
<dbReference type="EMBL" id="BX571856">
    <property type="protein sequence ID" value="CAG40696.1"/>
    <property type="molecule type" value="Genomic_DNA"/>
</dbReference>
<dbReference type="RefSeq" id="WP_000752909.1">
    <property type="nucleotide sequence ID" value="NC_002952.2"/>
</dbReference>
<dbReference type="SMR" id="Q6GG78"/>
<dbReference type="KEGG" id="sar:SAR1705"/>
<dbReference type="HOGENOM" id="CLU_135567_0_3_9"/>
<dbReference type="Proteomes" id="UP000000596">
    <property type="component" value="Chromosome"/>
</dbReference>
<dbReference type="Gene3D" id="1.10.1470.10">
    <property type="entry name" value="YjbJ"/>
    <property type="match status" value="1"/>
</dbReference>
<dbReference type="InterPro" id="IPR008462">
    <property type="entry name" value="CsbD"/>
</dbReference>
<dbReference type="InterPro" id="IPR050423">
    <property type="entry name" value="UPF0337_stress_rsp"/>
</dbReference>
<dbReference type="InterPro" id="IPR036629">
    <property type="entry name" value="YjbJ_sf"/>
</dbReference>
<dbReference type="PANTHER" id="PTHR34977">
    <property type="entry name" value="UPF0337 PROTEIN YJBJ"/>
    <property type="match status" value="1"/>
</dbReference>
<dbReference type="PANTHER" id="PTHR34977:SF1">
    <property type="entry name" value="UPF0337 PROTEIN YJBJ"/>
    <property type="match status" value="1"/>
</dbReference>
<dbReference type="Pfam" id="PF05532">
    <property type="entry name" value="CsbD"/>
    <property type="match status" value="1"/>
</dbReference>
<dbReference type="SUPFAM" id="SSF69047">
    <property type="entry name" value="Hypothetical protein YjbJ"/>
    <property type="match status" value="1"/>
</dbReference>
<name>Y1705_STAAR</name>
<accession>Q6GG78</accession>
<evidence type="ECO:0000256" key="1">
    <source>
        <dbReference type="SAM" id="MobiDB-lite"/>
    </source>
</evidence>
<evidence type="ECO:0000305" key="2"/>
<comment type="similarity">
    <text evidence="2">Belongs to the UPF0337 (CsbD) family.</text>
</comment>
<gene>
    <name type="ordered locus">SAR1705</name>
</gene>
<protein>
    <recommendedName>
        <fullName>UPF0337 protein SAR1705</fullName>
    </recommendedName>
</protein>